<evidence type="ECO:0000255" key="1">
    <source>
        <dbReference type="HAMAP-Rule" id="MF_00248"/>
    </source>
</evidence>
<keyword id="KW-0021">Allosteric enzyme</keyword>
<keyword id="KW-0963">Cytoplasm</keyword>
<keyword id="KW-0378">Hydrolase</keyword>
<keyword id="KW-0479">Metal-binding</keyword>
<keyword id="KW-0645">Protease</keyword>
<keyword id="KW-1185">Reference proteome</keyword>
<keyword id="KW-0915">Sodium</keyword>
<keyword id="KW-0888">Threonine protease</keyword>
<proteinExistence type="inferred from homology"/>
<accession>A9M9R4</accession>
<protein>
    <recommendedName>
        <fullName evidence="1">ATP-dependent protease subunit HslV</fullName>
        <ecNumber evidence="1">3.4.25.2</ecNumber>
    </recommendedName>
</protein>
<comment type="function">
    <text evidence="1">Protease subunit of a proteasome-like degradation complex believed to be a general protein degrading machinery.</text>
</comment>
<comment type="catalytic activity">
    <reaction evidence="1">
        <text>ATP-dependent cleavage of peptide bonds with broad specificity.</text>
        <dbReference type="EC" id="3.4.25.2"/>
    </reaction>
</comment>
<comment type="activity regulation">
    <text evidence="1">Allosterically activated by HslU binding.</text>
</comment>
<comment type="subunit">
    <text evidence="1">A double ring-shaped homohexamer of HslV is capped on each side by a ring-shaped HslU homohexamer. The assembly of the HslU/HslV complex is dependent on binding of ATP.</text>
</comment>
<comment type="subcellular location">
    <subcellularLocation>
        <location evidence="1">Cytoplasm</location>
    </subcellularLocation>
</comment>
<comment type="similarity">
    <text evidence="1">Belongs to the peptidase T1B family. HslV subfamily.</text>
</comment>
<dbReference type="EC" id="3.4.25.2" evidence="1"/>
<dbReference type="EMBL" id="CP000872">
    <property type="protein sequence ID" value="ABX63109.1"/>
    <property type="molecule type" value="Genomic_DNA"/>
</dbReference>
<dbReference type="RefSeq" id="WP_002965144.1">
    <property type="nucleotide sequence ID" value="NC_010103.1"/>
</dbReference>
<dbReference type="SMR" id="A9M9R4"/>
<dbReference type="MEROPS" id="T01.006"/>
<dbReference type="GeneID" id="55591650"/>
<dbReference type="KEGG" id="bcs:BCAN_A2126"/>
<dbReference type="HOGENOM" id="CLU_093872_1_0_5"/>
<dbReference type="PhylomeDB" id="A9M9R4"/>
<dbReference type="Proteomes" id="UP000001385">
    <property type="component" value="Chromosome I"/>
</dbReference>
<dbReference type="GO" id="GO:0009376">
    <property type="term" value="C:HslUV protease complex"/>
    <property type="evidence" value="ECO:0007669"/>
    <property type="project" value="UniProtKB-UniRule"/>
</dbReference>
<dbReference type="GO" id="GO:0005839">
    <property type="term" value="C:proteasome core complex"/>
    <property type="evidence" value="ECO:0007669"/>
    <property type="project" value="InterPro"/>
</dbReference>
<dbReference type="GO" id="GO:0046872">
    <property type="term" value="F:metal ion binding"/>
    <property type="evidence" value="ECO:0007669"/>
    <property type="project" value="UniProtKB-KW"/>
</dbReference>
<dbReference type="GO" id="GO:0004298">
    <property type="term" value="F:threonine-type endopeptidase activity"/>
    <property type="evidence" value="ECO:0007669"/>
    <property type="project" value="UniProtKB-KW"/>
</dbReference>
<dbReference type="GO" id="GO:0051603">
    <property type="term" value="P:proteolysis involved in protein catabolic process"/>
    <property type="evidence" value="ECO:0007669"/>
    <property type="project" value="InterPro"/>
</dbReference>
<dbReference type="CDD" id="cd01913">
    <property type="entry name" value="protease_HslV"/>
    <property type="match status" value="1"/>
</dbReference>
<dbReference type="FunFam" id="3.60.20.10:FF:000002">
    <property type="entry name" value="ATP-dependent protease subunit HslV"/>
    <property type="match status" value="1"/>
</dbReference>
<dbReference type="Gene3D" id="3.60.20.10">
    <property type="entry name" value="Glutamine Phosphoribosylpyrophosphate, subunit 1, domain 1"/>
    <property type="match status" value="1"/>
</dbReference>
<dbReference type="HAMAP" id="MF_00248">
    <property type="entry name" value="HslV"/>
    <property type="match status" value="1"/>
</dbReference>
<dbReference type="InterPro" id="IPR022281">
    <property type="entry name" value="ATP-dep_Prtase_HsIV_su"/>
</dbReference>
<dbReference type="InterPro" id="IPR029055">
    <property type="entry name" value="Ntn_hydrolases_N"/>
</dbReference>
<dbReference type="InterPro" id="IPR001353">
    <property type="entry name" value="Proteasome_sua/b"/>
</dbReference>
<dbReference type="InterPro" id="IPR023333">
    <property type="entry name" value="Proteasome_suB-type"/>
</dbReference>
<dbReference type="NCBIfam" id="TIGR03692">
    <property type="entry name" value="ATP_dep_HslV"/>
    <property type="match status" value="1"/>
</dbReference>
<dbReference type="NCBIfam" id="NF003964">
    <property type="entry name" value="PRK05456.1"/>
    <property type="match status" value="1"/>
</dbReference>
<dbReference type="PANTHER" id="PTHR32194:SF7">
    <property type="entry name" value="ATP-DEPENDENT PROTEASE SUBUNIT HSLV"/>
    <property type="match status" value="1"/>
</dbReference>
<dbReference type="PANTHER" id="PTHR32194">
    <property type="entry name" value="METALLOPROTEASE TLDD"/>
    <property type="match status" value="1"/>
</dbReference>
<dbReference type="Pfam" id="PF00227">
    <property type="entry name" value="Proteasome"/>
    <property type="match status" value="1"/>
</dbReference>
<dbReference type="PIRSF" id="PIRSF039093">
    <property type="entry name" value="HslV"/>
    <property type="match status" value="1"/>
</dbReference>
<dbReference type="SUPFAM" id="SSF56235">
    <property type="entry name" value="N-terminal nucleophile aminohydrolases (Ntn hydrolases)"/>
    <property type="match status" value="1"/>
</dbReference>
<dbReference type="PROSITE" id="PS51476">
    <property type="entry name" value="PROTEASOME_BETA_2"/>
    <property type="match status" value="1"/>
</dbReference>
<name>HSLV_BRUC2</name>
<feature type="chain" id="PRO_1000078416" description="ATP-dependent protease subunit HslV">
    <location>
        <begin position="1"/>
        <end position="184"/>
    </location>
</feature>
<feature type="active site" evidence="1">
    <location>
        <position position="12"/>
    </location>
</feature>
<feature type="binding site" evidence="1">
    <location>
        <position position="166"/>
    </location>
    <ligand>
        <name>Na(+)</name>
        <dbReference type="ChEBI" id="CHEBI:29101"/>
    </ligand>
</feature>
<feature type="binding site" evidence="1">
    <location>
        <position position="169"/>
    </location>
    <ligand>
        <name>Na(+)</name>
        <dbReference type="ChEBI" id="CHEBI:29101"/>
    </ligand>
</feature>
<feature type="binding site" evidence="1">
    <location>
        <position position="172"/>
    </location>
    <ligand>
        <name>Na(+)</name>
        <dbReference type="ChEBI" id="CHEBI:29101"/>
    </ligand>
</feature>
<organism>
    <name type="scientific">Brucella canis (strain ATCC 23365 / NCTC 10854 / RM-666)</name>
    <dbReference type="NCBI Taxonomy" id="483179"/>
    <lineage>
        <taxon>Bacteria</taxon>
        <taxon>Pseudomonadati</taxon>
        <taxon>Pseudomonadota</taxon>
        <taxon>Alphaproteobacteria</taxon>
        <taxon>Hyphomicrobiales</taxon>
        <taxon>Brucellaceae</taxon>
        <taxon>Brucella/Ochrobactrum group</taxon>
        <taxon>Brucella</taxon>
    </lineage>
</organism>
<reference key="1">
    <citation type="submission" date="2007-10" db="EMBL/GenBank/DDBJ databases">
        <title>Brucella canis ATCC 23365 whole genome shotgun sequencing project.</title>
        <authorList>
            <person name="Setubal J.C."/>
            <person name="Bowns C."/>
            <person name="Boyle S."/>
            <person name="Crasta O.R."/>
            <person name="Czar M.J."/>
            <person name="Dharmanolla C."/>
            <person name="Gillespie J.J."/>
            <person name="Kenyon R.W."/>
            <person name="Lu J."/>
            <person name="Mane S."/>
            <person name="Mohapatra S."/>
            <person name="Nagrani S."/>
            <person name="Purkayastha A."/>
            <person name="Rajasimha H.K."/>
            <person name="Shallom J.M."/>
            <person name="Shallom S."/>
            <person name="Shukla M."/>
            <person name="Snyder E.E."/>
            <person name="Sobral B.W."/>
            <person name="Wattam A.R."/>
            <person name="Will R."/>
            <person name="Williams K."/>
            <person name="Yoo H."/>
            <person name="Bruce D."/>
            <person name="Detter C."/>
            <person name="Munk C."/>
            <person name="Brettin T.S."/>
        </authorList>
    </citation>
    <scope>NUCLEOTIDE SEQUENCE [LARGE SCALE GENOMIC DNA]</scope>
    <source>
        <strain>ATCC 23365 / NCTC 10854 / RM-666</strain>
    </source>
</reference>
<sequence length="184" mass="19809">MIEHNPTTIYGTTIVTVRKDGKVVIAGDGQVSLGNTVMKGNARKVRRIGKGNVIAGFAGATADAFTLLERLEAKLEQYPDQLMRASVELAKDWRTDRYLRKLEAMMLVADSKVTLALTGTGDVLEPEQGVMAIGSGGNYALAAARALIETDKSAEEIARKAMNIAADICIYTNHNIIVESLDAQ</sequence>
<gene>
    <name evidence="1" type="primary">hslV</name>
    <name type="ordered locus">BCAN_A2126</name>
</gene>